<comment type="subunit">
    <text evidence="4">Forms a complex with cleavage and polyadenylation specificity factor (CPSF) subunits CLPS3, CLPS5, CPSF30, PCFS4, PCFS5, CSTF77 and FIPS3.</text>
</comment>
<comment type="subcellular location">
    <subcellularLocation>
        <location evidence="6">Nucleus</location>
    </subcellularLocation>
</comment>
<reference key="1">
    <citation type="journal article" date="2000" name="Nature">
        <title>Sequence and analysis of chromosome 1 of the plant Arabidopsis thaliana.</title>
        <authorList>
            <person name="Theologis A."/>
            <person name="Ecker J.R."/>
            <person name="Palm C.J."/>
            <person name="Federspiel N.A."/>
            <person name="Kaul S."/>
            <person name="White O."/>
            <person name="Alonso J."/>
            <person name="Altafi H."/>
            <person name="Araujo R."/>
            <person name="Bowman C.L."/>
            <person name="Brooks S.Y."/>
            <person name="Buehler E."/>
            <person name="Chan A."/>
            <person name="Chao Q."/>
            <person name="Chen H."/>
            <person name="Cheuk R.F."/>
            <person name="Chin C.W."/>
            <person name="Chung M.K."/>
            <person name="Conn L."/>
            <person name="Conway A.B."/>
            <person name="Conway A.R."/>
            <person name="Creasy T.H."/>
            <person name="Dewar K."/>
            <person name="Dunn P."/>
            <person name="Etgu P."/>
            <person name="Feldblyum T.V."/>
            <person name="Feng J.-D."/>
            <person name="Fong B."/>
            <person name="Fujii C.Y."/>
            <person name="Gill J.E."/>
            <person name="Goldsmith A.D."/>
            <person name="Haas B."/>
            <person name="Hansen N.F."/>
            <person name="Hughes B."/>
            <person name="Huizar L."/>
            <person name="Hunter J.L."/>
            <person name="Jenkins J."/>
            <person name="Johnson-Hopson C."/>
            <person name="Khan S."/>
            <person name="Khaykin E."/>
            <person name="Kim C.J."/>
            <person name="Koo H.L."/>
            <person name="Kremenetskaia I."/>
            <person name="Kurtz D.B."/>
            <person name="Kwan A."/>
            <person name="Lam B."/>
            <person name="Langin-Hooper S."/>
            <person name="Lee A."/>
            <person name="Lee J.M."/>
            <person name="Lenz C.A."/>
            <person name="Li J.H."/>
            <person name="Li Y.-P."/>
            <person name="Lin X."/>
            <person name="Liu S.X."/>
            <person name="Liu Z.A."/>
            <person name="Luros J.S."/>
            <person name="Maiti R."/>
            <person name="Marziali A."/>
            <person name="Militscher J."/>
            <person name="Miranda M."/>
            <person name="Nguyen M."/>
            <person name="Nierman W.C."/>
            <person name="Osborne B.I."/>
            <person name="Pai G."/>
            <person name="Peterson J."/>
            <person name="Pham P.K."/>
            <person name="Rizzo M."/>
            <person name="Rooney T."/>
            <person name="Rowley D."/>
            <person name="Sakano H."/>
            <person name="Salzberg S.L."/>
            <person name="Schwartz J.R."/>
            <person name="Shinn P."/>
            <person name="Southwick A.M."/>
            <person name="Sun H."/>
            <person name="Tallon L.J."/>
            <person name="Tambunga G."/>
            <person name="Toriumi M.J."/>
            <person name="Town C.D."/>
            <person name="Utterback T."/>
            <person name="Van Aken S."/>
            <person name="Vaysberg M."/>
            <person name="Vysotskaia V.S."/>
            <person name="Walker M."/>
            <person name="Wu D."/>
            <person name="Yu G."/>
            <person name="Fraser C.M."/>
            <person name="Venter J.C."/>
            <person name="Davis R.W."/>
        </authorList>
    </citation>
    <scope>NUCLEOTIDE SEQUENCE [LARGE SCALE GENOMIC DNA]</scope>
    <source>
        <strain>cv. Columbia</strain>
    </source>
</reference>
<reference key="2">
    <citation type="journal article" date="2017" name="Plant J.">
        <title>Araport11: a complete reannotation of the Arabidopsis thaliana reference genome.</title>
        <authorList>
            <person name="Cheng C.Y."/>
            <person name="Krishnakumar V."/>
            <person name="Chan A.P."/>
            <person name="Thibaud-Nissen F."/>
            <person name="Schobel S."/>
            <person name="Town C.D."/>
        </authorList>
    </citation>
    <scope>GENOME REANNOTATION</scope>
    <source>
        <strain>cv. Columbia</strain>
    </source>
</reference>
<reference key="3">
    <citation type="journal article" date="2003" name="Science">
        <title>Empirical analysis of transcriptional activity in the Arabidopsis genome.</title>
        <authorList>
            <person name="Yamada K."/>
            <person name="Lim J."/>
            <person name="Dale J.M."/>
            <person name="Chen H."/>
            <person name="Shinn P."/>
            <person name="Palm C.J."/>
            <person name="Southwick A.M."/>
            <person name="Wu H.C."/>
            <person name="Kim C.J."/>
            <person name="Nguyen M."/>
            <person name="Pham P.K."/>
            <person name="Cheuk R.F."/>
            <person name="Karlin-Newmann G."/>
            <person name="Liu S.X."/>
            <person name="Lam B."/>
            <person name="Sakano H."/>
            <person name="Wu T."/>
            <person name="Yu G."/>
            <person name="Miranda M."/>
            <person name="Quach H.L."/>
            <person name="Tripp M."/>
            <person name="Chang C.H."/>
            <person name="Lee J.M."/>
            <person name="Toriumi M.J."/>
            <person name="Chan M.M."/>
            <person name="Tang C.C."/>
            <person name="Onodera C.S."/>
            <person name="Deng J.M."/>
            <person name="Akiyama K."/>
            <person name="Ansari Y."/>
            <person name="Arakawa T."/>
            <person name="Banh J."/>
            <person name="Banno F."/>
            <person name="Bowser L."/>
            <person name="Brooks S.Y."/>
            <person name="Carninci P."/>
            <person name="Chao Q."/>
            <person name="Choy N."/>
            <person name="Enju A."/>
            <person name="Goldsmith A.D."/>
            <person name="Gurjal M."/>
            <person name="Hansen N.F."/>
            <person name="Hayashizaki Y."/>
            <person name="Johnson-Hopson C."/>
            <person name="Hsuan V.W."/>
            <person name="Iida K."/>
            <person name="Karnes M."/>
            <person name="Khan S."/>
            <person name="Koesema E."/>
            <person name="Ishida J."/>
            <person name="Jiang P.X."/>
            <person name="Jones T."/>
            <person name="Kawai J."/>
            <person name="Kamiya A."/>
            <person name="Meyers C."/>
            <person name="Nakajima M."/>
            <person name="Narusaka M."/>
            <person name="Seki M."/>
            <person name="Sakurai T."/>
            <person name="Satou M."/>
            <person name="Tamse R."/>
            <person name="Vaysberg M."/>
            <person name="Wallender E.K."/>
            <person name="Wong C."/>
            <person name="Yamamura Y."/>
            <person name="Yuan S."/>
            <person name="Shinozaki K."/>
            <person name="Davis R.W."/>
            <person name="Theologis A."/>
            <person name="Ecker J.R."/>
        </authorList>
    </citation>
    <scope>NUCLEOTIDE SEQUENCE [LARGE SCALE MRNA]</scope>
    <source>
        <strain>cv. Columbia</strain>
    </source>
</reference>
<reference key="4">
    <citation type="submission" date="2005-01" db="EMBL/GenBank/DDBJ databases">
        <title>Arabidopsis ORF clones.</title>
        <authorList>
            <person name="Kim C.J."/>
            <person name="Chen H."/>
            <person name="Cheuk R.F."/>
            <person name="Shinn P."/>
            <person name="Ecker J.R."/>
        </authorList>
    </citation>
    <scope>NUCLEOTIDE SEQUENCE [LARGE SCALE MRNA]</scope>
    <source>
        <strain>cv. Columbia</strain>
    </source>
</reference>
<reference key="5">
    <citation type="journal article" date="2004" name="BMC Genomics">
        <title>Conservation, diversification and expansion of C2H2 zinc finger proteins in the Arabidopsis thaliana genome.</title>
        <authorList>
            <person name="Englbrecht C.C."/>
            <person name="Schoof H."/>
            <person name="Boehm S."/>
        </authorList>
    </citation>
    <scope>GENE FAMILY</scope>
</reference>
<reference key="6">
    <citation type="journal article" date="2008" name="BMC Genomics">
        <title>Arabidopsis mRNA polyadenylation machinery: comprehensive analysis of protein-protein interactions and gene expression profiling.</title>
        <authorList>
            <person name="Hunt A.G."/>
            <person name="Xu R."/>
            <person name="Addepalli B."/>
            <person name="Rao S."/>
            <person name="Forbes K.P."/>
            <person name="Meeks L.R."/>
            <person name="Xing D."/>
            <person name="Mo M."/>
            <person name="Zhao H."/>
            <person name="Bandyopadhyay A."/>
            <person name="Dampanaboina L."/>
            <person name="Marion A."/>
            <person name="Von Lanken C."/>
            <person name="Li Q.Q."/>
        </authorList>
    </citation>
    <scope>INTERACTION WITH CSTF77; CLPS3; CLPS5; PCFS4; PCFS5; CPSF30 AND FIPS3</scope>
    <scope>GENE FAMILY</scope>
    <scope>NOMENCLATURE</scope>
</reference>
<accession>Q9C710</accession>
<accession>Q8VZG9</accession>
<sequence>MASNGSFSAQRNANARTTMKRRSDNRGYGGGIGGYQEETNRYAPPQKRFRSQAQQQFRSGHNPLYHHHGSNNNNVSRVSSQSYNNCGVDVIASNSSFALRNNDSNTNNYQKPFVAGYGNPNPQIVPLPLPYRKLDDNLSLDSLPDWVPNSRTLTPNYPVRSSNFVPNTPVFTNVQNPMNHSNMVSVVSQSMHQPIVLSKELTDLLSLLNNEKEKKTLEASNSDSLPVGLSFDNPSSLNVRHESVIKSLYSDMPRQCSSCGLRFKCQEEHSKHMDWHVRKNRSVKTTTRLGQQPKKSRGWLASASLWLCAATGGETVEVASFGGEMQKKKGKDEEPKQLMVPADEDQKNCALCVEPFEEFFSHEDDDWMYKDAVYLTKNGRIVHVKCMPEPRPAKDLREPSRVMSVTVPSVAKAIAC</sequence>
<gene>
    <name evidence="5" type="primary">PCFS1</name>
    <name evidence="7" type="ordered locus">At1g66500</name>
    <name evidence="8" type="ORF">F28G11.6</name>
</gene>
<proteinExistence type="evidence at protein level"/>
<evidence type="ECO:0000255" key="1"/>
<evidence type="ECO:0000255" key="2">
    <source>
        <dbReference type="PROSITE-ProRule" id="PRU00042"/>
    </source>
</evidence>
<evidence type="ECO:0000256" key="3">
    <source>
        <dbReference type="SAM" id="MobiDB-lite"/>
    </source>
</evidence>
<evidence type="ECO:0000269" key="4">
    <source>
    </source>
</evidence>
<evidence type="ECO:0000303" key="5">
    <source>
    </source>
</evidence>
<evidence type="ECO:0000305" key="6"/>
<evidence type="ECO:0000312" key="7">
    <source>
        <dbReference type="Araport" id="AT1G66500"/>
    </source>
</evidence>
<evidence type="ECO:0000312" key="8">
    <source>
        <dbReference type="EMBL" id="AAG51167.1"/>
    </source>
</evidence>
<evidence type="ECO:0000312" key="9">
    <source>
        <dbReference type="Proteomes" id="UP000006548"/>
    </source>
</evidence>
<protein>
    <recommendedName>
        <fullName evidence="6">Polyadenylation and cleavage factor homolog 1</fullName>
    </recommendedName>
</protein>
<dbReference type="EMBL" id="AC074025">
    <property type="protein sequence ID" value="AAG51167.1"/>
    <property type="molecule type" value="Genomic_DNA"/>
</dbReference>
<dbReference type="EMBL" id="CP002684">
    <property type="protein sequence ID" value="AEE34516.1"/>
    <property type="molecule type" value="Genomic_DNA"/>
</dbReference>
<dbReference type="EMBL" id="AY064970">
    <property type="protein sequence ID" value="AAL57625.1"/>
    <property type="molecule type" value="mRNA"/>
</dbReference>
<dbReference type="EMBL" id="BT020523">
    <property type="protein sequence ID" value="AAW39024.1"/>
    <property type="molecule type" value="mRNA"/>
</dbReference>
<dbReference type="PIR" id="F96690">
    <property type="entry name" value="F96690"/>
</dbReference>
<dbReference type="RefSeq" id="NP_176823.1">
    <property type="nucleotide sequence ID" value="NM_105321.4"/>
</dbReference>
<dbReference type="BioGRID" id="28189">
    <property type="interactions" value="6"/>
</dbReference>
<dbReference type="FunCoup" id="Q9C710">
    <property type="interactions" value="1"/>
</dbReference>
<dbReference type="IntAct" id="Q9C710">
    <property type="interactions" value="6"/>
</dbReference>
<dbReference type="STRING" id="3702.Q9C710"/>
<dbReference type="PaxDb" id="3702-AT1G66500.1"/>
<dbReference type="ProteomicsDB" id="236663"/>
<dbReference type="EnsemblPlants" id="AT1G66500.1">
    <property type="protein sequence ID" value="AT1G66500.1"/>
    <property type="gene ID" value="AT1G66500"/>
</dbReference>
<dbReference type="GeneID" id="842968"/>
<dbReference type="Gramene" id="AT1G66500.1">
    <property type="protein sequence ID" value="AT1G66500.1"/>
    <property type="gene ID" value="AT1G66500"/>
</dbReference>
<dbReference type="KEGG" id="ath:AT1G66500"/>
<dbReference type="Araport" id="AT1G66500"/>
<dbReference type="TAIR" id="AT1G66500"/>
<dbReference type="eggNOG" id="KOG2071">
    <property type="taxonomic scope" value="Eukaryota"/>
</dbReference>
<dbReference type="HOGENOM" id="CLU_046922_0_0_1"/>
<dbReference type="InParanoid" id="Q9C710"/>
<dbReference type="OMA" id="KLPRYQT"/>
<dbReference type="PhylomeDB" id="Q9C710"/>
<dbReference type="PRO" id="PR:Q9C710"/>
<dbReference type="Proteomes" id="UP000006548">
    <property type="component" value="Chromosome 1"/>
</dbReference>
<dbReference type="ExpressionAtlas" id="Q9C710">
    <property type="expression patterns" value="baseline and differential"/>
</dbReference>
<dbReference type="GO" id="GO:0005634">
    <property type="term" value="C:nucleus"/>
    <property type="evidence" value="ECO:0007669"/>
    <property type="project" value="UniProtKB-SubCell"/>
</dbReference>
<dbReference type="GO" id="GO:0003729">
    <property type="term" value="F:mRNA binding"/>
    <property type="evidence" value="ECO:0007669"/>
    <property type="project" value="InterPro"/>
</dbReference>
<dbReference type="GO" id="GO:0000993">
    <property type="term" value="F:RNA polymerase II complex binding"/>
    <property type="evidence" value="ECO:0007669"/>
    <property type="project" value="InterPro"/>
</dbReference>
<dbReference type="GO" id="GO:0008270">
    <property type="term" value="F:zinc ion binding"/>
    <property type="evidence" value="ECO:0007669"/>
    <property type="project" value="UniProtKB-KW"/>
</dbReference>
<dbReference type="GO" id="GO:0031124">
    <property type="term" value="P:mRNA 3'-end processing"/>
    <property type="evidence" value="ECO:0007669"/>
    <property type="project" value="InterPro"/>
</dbReference>
<dbReference type="GO" id="GO:0006369">
    <property type="term" value="P:termination of RNA polymerase II transcription"/>
    <property type="evidence" value="ECO:0007669"/>
    <property type="project" value="InterPro"/>
</dbReference>
<dbReference type="InterPro" id="IPR045154">
    <property type="entry name" value="PCF11-like"/>
</dbReference>
<dbReference type="InterPro" id="IPR057242">
    <property type="entry name" value="PCFS4-like"/>
</dbReference>
<dbReference type="InterPro" id="IPR013087">
    <property type="entry name" value="Znf_C2H2_type"/>
</dbReference>
<dbReference type="PANTHER" id="PTHR15921:SF11">
    <property type="entry name" value="POLYADENYLATION AND CLEAVAGE FACTOR HOMOLOG 1-RELATED"/>
    <property type="match status" value="1"/>
</dbReference>
<dbReference type="PANTHER" id="PTHR15921">
    <property type="entry name" value="PRE-MRNA CLEAVAGE COMPLEX II"/>
    <property type="match status" value="1"/>
</dbReference>
<dbReference type="Pfam" id="PF23228">
    <property type="entry name" value="zf_PCFS4"/>
    <property type="match status" value="1"/>
</dbReference>
<dbReference type="PROSITE" id="PS00028">
    <property type="entry name" value="ZINC_FINGER_C2H2_1"/>
    <property type="match status" value="1"/>
</dbReference>
<keyword id="KW-0175">Coiled coil</keyword>
<keyword id="KW-0479">Metal-binding</keyword>
<keyword id="KW-0539">Nucleus</keyword>
<keyword id="KW-1185">Reference proteome</keyword>
<keyword id="KW-0862">Zinc</keyword>
<keyword id="KW-0863">Zinc-finger</keyword>
<name>PCFS1_ARATH</name>
<feature type="chain" id="PRO_0000431349" description="Polyadenylation and cleavage factor homolog 1">
    <location>
        <begin position="1"/>
        <end position="416"/>
    </location>
</feature>
<feature type="zinc finger region" description="C2H2-type" evidence="2">
    <location>
        <begin position="254"/>
        <end position="276"/>
    </location>
</feature>
<feature type="region of interest" description="Disordered" evidence="3">
    <location>
        <begin position="1"/>
        <end position="80"/>
    </location>
</feature>
<feature type="coiled-coil region" evidence="1">
    <location>
        <begin position="199"/>
        <end position="220"/>
    </location>
</feature>
<feature type="compositionally biased region" description="Polar residues" evidence="3">
    <location>
        <begin position="1"/>
        <end position="17"/>
    </location>
</feature>
<feature type="compositionally biased region" description="Low complexity" evidence="3">
    <location>
        <begin position="70"/>
        <end position="80"/>
    </location>
</feature>
<feature type="sequence conflict" description="In Ref. 3; AAL57625." ref="3">
    <original>L</original>
    <variation>F</variation>
    <location>
        <position position="138"/>
    </location>
</feature>
<organism evidence="9">
    <name type="scientific">Arabidopsis thaliana</name>
    <name type="common">Mouse-ear cress</name>
    <dbReference type="NCBI Taxonomy" id="3702"/>
    <lineage>
        <taxon>Eukaryota</taxon>
        <taxon>Viridiplantae</taxon>
        <taxon>Streptophyta</taxon>
        <taxon>Embryophyta</taxon>
        <taxon>Tracheophyta</taxon>
        <taxon>Spermatophyta</taxon>
        <taxon>Magnoliopsida</taxon>
        <taxon>eudicotyledons</taxon>
        <taxon>Gunneridae</taxon>
        <taxon>Pentapetalae</taxon>
        <taxon>rosids</taxon>
        <taxon>malvids</taxon>
        <taxon>Brassicales</taxon>
        <taxon>Brassicaceae</taxon>
        <taxon>Camelineae</taxon>
        <taxon>Arabidopsis</taxon>
    </lineage>
</organism>